<evidence type="ECO:0000255" key="1"/>
<evidence type="ECO:0000305" key="2"/>
<name>YVAV_BACSU</name>
<proteinExistence type="inferred from homology"/>
<dbReference type="EMBL" id="AF008930">
    <property type="protein sequence ID" value="AAC14360.1"/>
    <property type="status" value="ALT_INIT"/>
    <property type="molecule type" value="Genomic_DNA"/>
</dbReference>
<dbReference type="EMBL" id="AL009126">
    <property type="protein sequence ID" value="CAB15379.2"/>
    <property type="molecule type" value="Genomic_DNA"/>
</dbReference>
<dbReference type="EMBL" id="AB006738">
    <property type="protein sequence ID" value="BAA21899.1"/>
    <property type="molecule type" value="Genomic_DNA"/>
</dbReference>
<dbReference type="PIR" id="G70028">
    <property type="entry name" value="G70028"/>
</dbReference>
<dbReference type="RefSeq" id="NP_391254.2">
    <property type="nucleotide sequence ID" value="NC_000964.3"/>
</dbReference>
<dbReference type="RefSeq" id="WP_003243347.1">
    <property type="nucleotide sequence ID" value="NZ_OZ025638.1"/>
</dbReference>
<dbReference type="SMR" id="C0SPB8"/>
<dbReference type="FunCoup" id="C0SPB8">
    <property type="interactions" value="2"/>
</dbReference>
<dbReference type="STRING" id="224308.BSU33740"/>
<dbReference type="PaxDb" id="224308-BSU33740"/>
<dbReference type="EnsemblBacteria" id="CAB15379">
    <property type="protein sequence ID" value="CAB15379"/>
    <property type="gene ID" value="BSU_33740"/>
</dbReference>
<dbReference type="GeneID" id="936233"/>
<dbReference type="KEGG" id="bsu:BSU33740"/>
<dbReference type="PATRIC" id="fig|224308.179.peg.3659"/>
<dbReference type="eggNOG" id="COG1510">
    <property type="taxonomic scope" value="Bacteria"/>
</dbReference>
<dbReference type="InParanoid" id="C0SPB8"/>
<dbReference type="OrthoDB" id="9800374at2"/>
<dbReference type="PhylomeDB" id="C0SPB8"/>
<dbReference type="BioCyc" id="BSUB:BSU33740-MONOMER"/>
<dbReference type="Proteomes" id="UP000001570">
    <property type="component" value="Chromosome"/>
</dbReference>
<dbReference type="GO" id="GO:0003677">
    <property type="term" value="F:DNA binding"/>
    <property type="evidence" value="ECO:0007669"/>
    <property type="project" value="UniProtKB-KW"/>
</dbReference>
<dbReference type="GO" id="GO:0003700">
    <property type="term" value="F:DNA-binding transcription factor activity"/>
    <property type="evidence" value="ECO:0007669"/>
    <property type="project" value="InterPro"/>
</dbReference>
<dbReference type="Gene3D" id="1.10.10.10">
    <property type="entry name" value="Winged helix-like DNA-binding domain superfamily/Winged helix DNA-binding domain"/>
    <property type="match status" value="1"/>
</dbReference>
<dbReference type="InterPro" id="IPR052362">
    <property type="entry name" value="HTH-GbsR_regulator"/>
</dbReference>
<dbReference type="InterPro" id="IPR000835">
    <property type="entry name" value="HTH_MarR-typ"/>
</dbReference>
<dbReference type="InterPro" id="IPR026282">
    <property type="entry name" value="MJ1563"/>
</dbReference>
<dbReference type="InterPro" id="IPR036388">
    <property type="entry name" value="WH-like_DNA-bd_sf"/>
</dbReference>
<dbReference type="InterPro" id="IPR036390">
    <property type="entry name" value="WH_DNA-bd_sf"/>
</dbReference>
<dbReference type="PANTHER" id="PTHR38465">
    <property type="entry name" value="HTH-TYPE TRANSCRIPTIONAL REGULATOR MJ1563-RELATED"/>
    <property type="match status" value="1"/>
</dbReference>
<dbReference type="PANTHER" id="PTHR38465:SF1">
    <property type="entry name" value="HTH-TYPE TRANSCRIPTIONAL REGULATOR MJ1563-RELATED"/>
    <property type="match status" value="1"/>
</dbReference>
<dbReference type="Pfam" id="PF12802">
    <property type="entry name" value="MarR_2"/>
    <property type="match status" value="1"/>
</dbReference>
<dbReference type="PIRSF" id="PIRSF006707">
    <property type="entry name" value="MJ1563"/>
    <property type="match status" value="1"/>
</dbReference>
<dbReference type="SUPFAM" id="SSF46785">
    <property type="entry name" value="Winged helix' DNA-binding domain"/>
    <property type="match status" value="1"/>
</dbReference>
<sequence>MEKDPLTIIEQAEDHFIERIAENMHAFGMPSTVGRVLGIIYMNRKPMTLTELSEATGMSKTRMSQVVREMLDANIAEKVFEKGVRKDLYEVEQDYYQTFITLFSATWSKVVSKNKMMHKKLNRELLSVLDEELTPEAEEKVNELLKELKEWLDYYNWLSRLIEFFESEDIFKYVPKP</sequence>
<accession>C0SPB8</accession>
<accession>O30512</accession>
<accession>O32240</accession>
<accession>Q795K6</accession>
<accession>Q7DL41</accession>
<organism>
    <name type="scientific">Bacillus subtilis (strain 168)</name>
    <dbReference type="NCBI Taxonomy" id="224308"/>
    <lineage>
        <taxon>Bacteria</taxon>
        <taxon>Bacillati</taxon>
        <taxon>Bacillota</taxon>
        <taxon>Bacilli</taxon>
        <taxon>Bacillales</taxon>
        <taxon>Bacillaceae</taxon>
        <taxon>Bacillus</taxon>
    </lineage>
</organism>
<feature type="chain" id="PRO_0000389134" description="Putative HTH-type transcriptional regulator YvaV">
    <location>
        <begin position="1"/>
        <end position="177"/>
    </location>
</feature>
<feature type="DNA-binding region" description="H-T-H motif" evidence="1">
    <location>
        <begin position="49"/>
        <end position="73"/>
    </location>
</feature>
<comment type="similarity">
    <text evidence="2">Belongs to the GbsR family.</text>
</comment>
<comment type="sequence caution" evidence="2">
    <conflict type="erroneous initiation">
        <sequence resource="EMBL-CDS" id="AAC14360"/>
    </conflict>
</comment>
<gene>
    <name type="primary">yvaV</name>
    <name type="ordered locus">BSU33740</name>
</gene>
<protein>
    <recommendedName>
        <fullName>Putative HTH-type transcriptional regulator YvaV</fullName>
    </recommendedName>
</protein>
<keyword id="KW-0238">DNA-binding</keyword>
<keyword id="KW-1185">Reference proteome</keyword>
<keyword id="KW-0804">Transcription</keyword>
<keyword id="KW-0805">Transcription regulation</keyword>
<reference key="1">
    <citation type="journal article" date="1999" name="Mol. Microbiol.">
        <title>Two evolutionarily closely related ABC transporters mediate the uptake of choline for synthesis of the osmoprotectant glycine betaine in Bacillus subtilis.</title>
        <authorList>
            <person name="Kappes R.M."/>
            <person name="Kempf B."/>
            <person name="Kneip S."/>
            <person name="Boch J."/>
            <person name="Gade J."/>
            <person name="Meier-Wagner J."/>
            <person name="Bremer E."/>
        </authorList>
    </citation>
    <scope>NUCLEOTIDE SEQUENCE [GENOMIC DNA]</scope>
    <source>
        <strain>168 / JH642</strain>
    </source>
</reference>
<reference key="2">
    <citation type="journal article" date="1997" name="Nature">
        <title>The complete genome sequence of the Gram-positive bacterium Bacillus subtilis.</title>
        <authorList>
            <person name="Kunst F."/>
            <person name="Ogasawara N."/>
            <person name="Moszer I."/>
            <person name="Albertini A.M."/>
            <person name="Alloni G."/>
            <person name="Azevedo V."/>
            <person name="Bertero M.G."/>
            <person name="Bessieres P."/>
            <person name="Bolotin A."/>
            <person name="Borchert S."/>
            <person name="Borriss R."/>
            <person name="Boursier L."/>
            <person name="Brans A."/>
            <person name="Braun M."/>
            <person name="Brignell S.C."/>
            <person name="Bron S."/>
            <person name="Brouillet S."/>
            <person name="Bruschi C.V."/>
            <person name="Caldwell B."/>
            <person name="Capuano V."/>
            <person name="Carter N.M."/>
            <person name="Choi S.-K."/>
            <person name="Codani J.-J."/>
            <person name="Connerton I.F."/>
            <person name="Cummings N.J."/>
            <person name="Daniel R.A."/>
            <person name="Denizot F."/>
            <person name="Devine K.M."/>
            <person name="Duesterhoeft A."/>
            <person name="Ehrlich S.D."/>
            <person name="Emmerson P.T."/>
            <person name="Entian K.-D."/>
            <person name="Errington J."/>
            <person name="Fabret C."/>
            <person name="Ferrari E."/>
            <person name="Foulger D."/>
            <person name="Fritz C."/>
            <person name="Fujita M."/>
            <person name="Fujita Y."/>
            <person name="Fuma S."/>
            <person name="Galizzi A."/>
            <person name="Galleron N."/>
            <person name="Ghim S.-Y."/>
            <person name="Glaser P."/>
            <person name="Goffeau A."/>
            <person name="Golightly E.J."/>
            <person name="Grandi G."/>
            <person name="Guiseppi G."/>
            <person name="Guy B.J."/>
            <person name="Haga K."/>
            <person name="Haiech J."/>
            <person name="Harwood C.R."/>
            <person name="Henaut A."/>
            <person name="Hilbert H."/>
            <person name="Holsappel S."/>
            <person name="Hosono S."/>
            <person name="Hullo M.-F."/>
            <person name="Itaya M."/>
            <person name="Jones L.-M."/>
            <person name="Joris B."/>
            <person name="Karamata D."/>
            <person name="Kasahara Y."/>
            <person name="Klaerr-Blanchard M."/>
            <person name="Klein C."/>
            <person name="Kobayashi Y."/>
            <person name="Koetter P."/>
            <person name="Koningstein G."/>
            <person name="Krogh S."/>
            <person name="Kumano M."/>
            <person name="Kurita K."/>
            <person name="Lapidus A."/>
            <person name="Lardinois S."/>
            <person name="Lauber J."/>
            <person name="Lazarevic V."/>
            <person name="Lee S.-M."/>
            <person name="Levine A."/>
            <person name="Liu H."/>
            <person name="Masuda S."/>
            <person name="Mauel C."/>
            <person name="Medigue C."/>
            <person name="Medina N."/>
            <person name="Mellado R.P."/>
            <person name="Mizuno M."/>
            <person name="Moestl D."/>
            <person name="Nakai S."/>
            <person name="Noback M."/>
            <person name="Noone D."/>
            <person name="O'Reilly M."/>
            <person name="Ogawa K."/>
            <person name="Ogiwara A."/>
            <person name="Oudega B."/>
            <person name="Park S.-H."/>
            <person name="Parro V."/>
            <person name="Pohl T.M."/>
            <person name="Portetelle D."/>
            <person name="Porwollik S."/>
            <person name="Prescott A.M."/>
            <person name="Presecan E."/>
            <person name="Pujic P."/>
            <person name="Purnelle B."/>
            <person name="Rapoport G."/>
            <person name="Rey M."/>
            <person name="Reynolds S."/>
            <person name="Rieger M."/>
            <person name="Rivolta C."/>
            <person name="Rocha E."/>
            <person name="Roche B."/>
            <person name="Rose M."/>
            <person name="Sadaie Y."/>
            <person name="Sato T."/>
            <person name="Scanlan E."/>
            <person name="Schleich S."/>
            <person name="Schroeter R."/>
            <person name="Scoffone F."/>
            <person name="Sekiguchi J."/>
            <person name="Sekowska A."/>
            <person name="Seror S.J."/>
            <person name="Serror P."/>
            <person name="Shin B.-S."/>
            <person name="Soldo B."/>
            <person name="Sorokin A."/>
            <person name="Tacconi E."/>
            <person name="Takagi T."/>
            <person name="Takahashi H."/>
            <person name="Takemaru K."/>
            <person name="Takeuchi M."/>
            <person name="Tamakoshi A."/>
            <person name="Tanaka T."/>
            <person name="Terpstra P."/>
            <person name="Tognoni A."/>
            <person name="Tosato V."/>
            <person name="Uchiyama S."/>
            <person name="Vandenbol M."/>
            <person name="Vannier F."/>
            <person name="Vassarotti A."/>
            <person name="Viari A."/>
            <person name="Wambutt R."/>
            <person name="Wedler E."/>
            <person name="Wedler H."/>
            <person name="Weitzenegger T."/>
            <person name="Winters P."/>
            <person name="Wipat A."/>
            <person name="Yamamoto H."/>
            <person name="Yamane K."/>
            <person name="Yasumoto K."/>
            <person name="Yata K."/>
            <person name="Yoshida K."/>
            <person name="Yoshikawa H.-F."/>
            <person name="Zumstein E."/>
            <person name="Yoshikawa H."/>
            <person name="Danchin A."/>
        </authorList>
    </citation>
    <scope>NUCLEOTIDE SEQUENCE [LARGE SCALE GENOMIC DNA]</scope>
    <source>
        <strain>168</strain>
    </source>
</reference>
<reference key="3">
    <citation type="submission" date="1997-08" db="EMBL/GenBank/DDBJ databases">
        <authorList>
            <person name="Nakamura A."/>
            <person name="Grau R."/>
            <person name="Perego M."/>
            <person name="Hoch J.A."/>
        </authorList>
    </citation>
    <scope>NUCLEOTIDE SEQUENCE [GENOMIC DNA] OF 4-177</scope>
    <source>
        <strain>168 / JH642</strain>
    </source>
</reference>